<sequence length="239" mass="25069">MNQTPLRLLIHGASGRMGQALLRLAAEHPESLQIVAAVTGRAPAQRVVDGVPFFAASELPGAPAFDVAIDFSLPEGFDPLLALCVERGAGLVSGTTGISSSQRQALEAAAASIPLVWASNFSLGVAVLDELVERAAQALAGWDCDIVESHHTQKKDAPSGTALTLGAAAQRGGAEPHYASLRAGDIVGEHLVQFTGLGERIELVHRATNRDIFARGALFAARQLQGRAPGSYRVRDLLQ</sequence>
<dbReference type="EC" id="1.17.1.8" evidence="1"/>
<dbReference type="EMBL" id="CP001111">
    <property type="protein sequence ID" value="ACF51514.1"/>
    <property type="molecule type" value="Genomic_DNA"/>
</dbReference>
<dbReference type="SMR" id="B4SHT7"/>
<dbReference type="STRING" id="391008.Smal_1810"/>
<dbReference type="KEGG" id="smt:Smal_1810"/>
<dbReference type="eggNOG" id="COG0289">
    <property type="taxonomic scope" value="Bacteria"/>
</dbReference>
<dbReference type="HOGENOM" id="CLU_047479_2_2_6"/>
<dbReference type="OrthoDB" id="9790352at2"/>
<dbReference type="UniPathway" id="UPA00034">
    <property type="reaction ID" value="UER00018"/>
</dbReference>
<dbReference type="Proteomes" id="UP000001867">
    <property type="component" value="Chromosome"/>
</dbReference>
<dbReference type="GO" id="GO:0005829">
    <property type="term" value="C:cytosol"/>
    <property type="evidence" value="ECO:0007669"/>
    <property type="project" value="TreeGrafter"/>
</dbReference>
<dbReference type="GO" id="GO:0008839">
    <property type="term" value="F:4-hydroxy-tetrahydrodipicolinate reductase"/>
    <property type="evidence" value="ECO:0007669"/>
    <property type="project" value="UniProtKB-EC"/>
</dbReference>
<dbReference type="GO" id="GO:0051287">
    <property type="term" value="F:NAD binding"/>
    <property type="evidence" value="ECO:0007669"/>
    <property type="project" value="UniProtKB-UniRule"/>
</dbReference>
<dbReference type="GO" id="GO:0050661">
    <property type="term" value="F:NADP binding"/>
    <property type="evidence" value="ECO:0007669"/>
    <property type="project" value="UniProtKB-UniRule"/>
</dbReference>
<dbReference type="GO" id="GO:0016726">
    <property type="term" value="F:oxidoreductase activity, acting on CH or CH2 groups, NAD or NADP as acceptor"/>
    <property type="evidence" value="ECO:0007669"/>
    <property type="project" value="UniProtKB-UniRule"/>
</dbReference>
<dbReference type="GO" id="GO:0019877">
    <property type="term" value="P:diaminopimelate biosynthetic process"/>
    <property type="evidence" value="ECO:0007669"/>
    <property type="project" value="UniProtKB-UniRule"/>
</dbReference>
<dbReference type="GO" id="GO:0009089">
    <property type="term" value="P:lysine biosynthetic process via diaminopimelate"/>
    <property type="evidence" value="ECO:0007669"/>
    <property type="project" value="UniProtKB-UniRule"/>
</dbReference>
<dbReference type="CDD" id="cd02274">
    <property type="entry name" value="DHDPR_N"/>
    <property type="match status" value="1"/>
</dbReference>
<dbReference type="Gene3D" id="3.30.360.10">
    <property type="entry name" value="Dihydrodipicolinate Reductase, domain 2"/>
    <property type="match status" value="1"/>
</dbReference>
<dbReference type="Gene3D" id="3.40.50.720">
    <property type="entry name" value="NAD(P)-binding Rossmann-like Domain"/>
    <property type="match status" value="1"/>
</dbReference>
<dbReference type="HAMAP" id="MF_00102">
    <property type="entry name" value="DapB"/>
    <property type="match status" value="1"/>
</dbReference>
<dbReference type="InterPro" id="IPR022663">
    <property type="entry name" value="DapB_C"/>
</dbReference>
<dbReference type="InterPro" id="IPR000846">
    <property type="entry name" value="DapB_N"/>
</dbReference>
<dbReference type="InterPro" id="IPR022664">
    <property type="entry name" value="DapB_N_CS"/>
</dbReference>
<dbReference type="InterPro" id="IPR023940">
    <property type="entry name" value="DHDPR_bac"/>
</dbReference>
<dbReference type="InterPro" id="IPR036291">
    <property type="entry name" value="NAD(P)-bd_dom_sf"/>
</dbReference>
<dbReference type="NCBIfam" id="TIGR00036">
    <property type="entry name" value="dapB"/>
    <property type="match status" value="1"/>
</dbReference>
<dbReference type="PANTHER" id="PTHR20836:SF0">
    <property type="entry name" value="4-HYDROXY-TETRAHYDRODIPICOLINATE REDUCTASE 1, CHLOROPLASTIC-RELATED"/>
    <property type="match status" value="1"/>
</dbReference>
<dbReference type="PANTHER" id="PTHR20836">
    <property type="entry name" value="DIHYDRODIPICOLINATE REDUCTASE"/>
    <property type="match status" value="1"/>
</dbReference>
<dbReference type="Pfam" id="PF05173">
    <property type="entry name" value="DapB_C"/>
    <property type="match status" value="1"/>
</dbReference>
<dbReference type="Pfam" id="PF01113">
    <property type="entry name" value="DapB_N"/>
    <property type="match status" value="1"/>
</dbReference>
<dbReference type="PIRSF" id="PIRSF000161">
    <property type="entry name" value="DHPR"/>
    <property type="match status" value="1"/>
</dbReference>
<dbReference type="SUPFAM" id="SSF55347">
    <property type="entry name" value="Glyceraldehyde-3-phosphate dehydrogenase-like, C-terminal domain"/>
    <property type="match status" value="1"/>
</dbReference>
<dbReference type="SUPFAM" id="SSF51735">
    <property type="entry name" value="NAD(P)-binding Rossmann-fold domains"/>
    <property type="match status" value="1"/>
</dbReference>
<dbReference type="PROSITE" id="PS01298">
    <property type="entry name" value="DAPB"/>
    <property type="match status" value="1"/>
</dbReference>
<feature type="chain" id="PRO_1000094010" description="4-hydroxy-tetrahydrodipicolinate reductase">
    <location>
        <begin position="1"/>
        <end position="239"/>
    </location>
</feature>
<feature type="active site" description="Proton donor/acceptor" evidence="1">
    <location>
        <position position="150"/>
    </location>
</feature>
<feature type="active site" description="Proton donor" evidence="1">
    <location>
        <position position="154"/>
    </location>
</feature>
<feature type="binding site" evidence="1">
    <location>
        <begin position="12"/>
        <end position="17"/>
    </location>
    <ligand>
        <name>NAD(+)</name>
        <dbReference type="ChEBI" id="CHEBI:57540"/>
    </ligand>
</feature>
<feature type="binding site" evidence="1">
    <location>
        <begin position="94"/>
        <end position="96"/>
    </location>
    <ligand>
        <name>NAD(+)</name>
        <dbReference type="ChEBI" id="CHEBI:57540"/>
    </ligand>
</feature>
<feature type="binding site" evidence="1">
    <location>
        <begin position="118"/>
        <end position="121"/>
    </location>
    <ligand>
        <name>NAD(+)</name>
        <dbReference type="ChEBI" id="CHEBI:57540"/>
    </ligand>
</feature>
<feature type="binding site" evidence="1">
    <location>
        <position position="151"/>
    </location>
    <ligand>
        <name>(S)-2,3,4,5-tetrahydrodipicolinate</name>
        <dbReference type="ChEBI" id="CHEBI:16845"/>
    </ligand>
</feature>
<feature type="binding site" evidence="1">
    <location>
        <begin position="160"/>
        <end position="161"/>
    </location>
    <ligand>
        <name>(S)-2,3,4,5-tetrahydrodipicolinate</name>
        <dbReference type="ChEBI" id="CHEBI:16845"/>
    </ligand>
</feature>
<protein>
    <recommendedName>
        <fullName evidence="1">4-hydroxy-tetrahydrodipicolinate reductase</fullName>
        <shortName evidence="1">HTPA reductase</shortName>
        <ecNumber evidence="1">1.17.1.8</ecNumber>
    </recommendedName>
</protein>
<name>DAPB_STRM5</name>
<gene>
    <name evidence="1" type="primary">dapB</name>
    <name type="ordered locus">Smal_1810</name>
</gene>
<proteinExistence type="inferred from homology"/>
<accession>B4SHT7</accession>
<organism>
    <name type="scientific">Stenotrophomonas maltophilia (strain R551-3)</name>
    <dbReference type="NCBI Taxonomy" id="391008"/>
    <lineage>
        <taxon>Bacteria</taxon>
        <taxon>Pseudomonadati</taxon>
        <taxon>Pseudomonadota</taxon>
        <taxon>Gammaproteobacteria</taxon>
        <taxon>Lysobacterales</taxon>
        <taxon>Lysobacteraceae</taxon>
        <taxon>Stenotrophomonas</taxon>
        <taxon>Stenotrophomonas maltophilia group</taxon>
    </lineage>
</organism>
<comment type="function">
    <text evidence="1">Catalyzes the conversion of 4-hydroxy-tetrahydrodipicolinate (HTPA) to tetrahydrodipicolinate.</text>
</comment>
<comment type="catalytic activity">
    <reaction evidence="1">
        <text>(S)-2,3,4,5-tetrahydrodipicolinate + NAD(+) + H2O = (2S,4S)-4-hydroxy-2,3,4,5-tetrahydrodipicolinate + NADH + H(+)</text>
        <dbReference type="Rhea" id="RHEA:35323"/>
        <dbReference type="ChEBI" id="CHEBI:15377"/>
        <dbReference type="ChEBI" id="CHEBI:15378"/>
        <dbReference type="ChEBI" id="CHEBI:16845"/>
        <dbReference type="ChEBI" id="CHEBI:57540"/>
        <dbReference type="ChEBI" id="CHEBI:57945"/>
        <dbReference type="ChEBI" id="CHEBI:67139"/>
        <dbReference type="EC" id="1.17.1.8"/>
    </reaction>
</comment>
<comment type="catalytic activity">
    <reaction evidence="1">
        <text>(S)-2,3,4,5-tetrahydrodipicolinate + NADP(+) + H2O = (2S,4S)-4-hydroxy-2,3,4,5-tetrahydrodipicolinate + NADPH + H(+)</text>
        <dbReference type="Rhea" id="RHEA:35331"/>
        <dbReference type="ChEBI" id="CHEBI:15377"/>
        <dbReference type="ChEBI" id="CHEBI:15378"/>
        <dbReference type="ChEBI" id="CHEBI:16845"/>
        <dbReference type="ChEBI" id="CHEBI:57783"/>
        <dbReference type="ChEBI" id="CHEBI:58349"/>
        <dbReference type="ChEBI" id="CHEBI:67139"/>
        <dbReference type="EC" id="1.17.1.8"/>
    </reaction>
</comment>
<comment type="pathway">
    <text evidence="1">Amino-acid biosynthesis; L-lysine biosynthesis via DAP pathway; (S)-tetrahydrodipicolinate from L-aspartate: step 4/4.</text>
</comment>
<comment type="subcellular location">
    <subcellularLocation>
        <location evidence="1">Cytoplasm</location>
    </subcellularLocation>
</comment>
<comment type="similarity">
    <text evidence="1">Belongs to the DapB family.</text>
</comment>
<comment type="caution">
    <text evidence="2">Was originally thought to be a dihydrodipicolinate reductase (DHDPR), catalyzing the conversion of dihydrodipicolinate to tetrahydrodipicolinate. However, it was shown in E.coli that the substrate of the enzymatic reaction is not dihydrodipicolinate (DHDP) but in fact (2S,4S)-4-hydroxy-2,3,4,5-tetrahydrodipicolinic acid (HTPA), the product released by the DapA-catalyzed reaction.</text>
</comment>
<reference key="1">
    <citation type="submission" date="2008-06" db="EMBL/GenBank/DDBJ databases">
        <title>Complete sequence of Stenotrophomonas maltophilia R551-3.</title>
        <authorList>
            <consortium name="US DOE Joint Genome Institute"/>
            <person name="Lucas S."/>
            <person name="Copeland A."/>
            <person name="Lapidus A."/>
            <person name="Glavina del Rio T."/>
            <person name="Dalin E."/>
            <person name="Tice H."/>
            <person name="Pitluck S."/>
            <person name="Chain P."/>
            <person name="Malfatti S."/>
            <person name="Shin M."/>
            <person name="Vergez L."/>
            <person name="Lang D."/>
            <person name="Schmutz J."/>
            <person name="Larimer F."/>
            <person name="Land M."/>
            <person name="Hauser L."/>
            <person name="Kyrpides N."/>
            <person name="Mikhailova N."/>
            <person name="Taghavi S."/>
            <person name="Monchy S."/>
            <person name="Newman L."/>
            <person name="Vangronsveld J."/>
            <person name="van der Lelie D."/>
            <person name="Richardson P."/>
        </authorList>
    </citation>
    <scope>NUCLEOTIDE SEQUENCE [LARGE SCALE GENOMIC DNA]</scope>
    <source>
        <strain>R551-3</strain>
    </source>
</reference>
<evidence type="ECO:0000255" key="1">
    <source>
        <dbReference type="HAMAP-Rule" id="MF_00102"/>
    </source>
</evidence>
<evidence type="ECO:0000305" key="2"/>
<keyword id="KW-0028">Amino-acid biosynthesis</keyword>
<keyword id="KW-0963">Cytoplasm</keyword>
<keyword id="KW-0220">Diaminopimelate biosynthesis</keyword>
<keyword id="KW-0457">Lysine biosynthesis</keyword>
<keyword id="KW-0520">NAD</keyword>
<keyword id="KW-0521">NADP</keyword>
<keyword id="KW-0560">Oxidoreductase</keyword>